<proteinExistence type="inferred from homology"/>
<organism>
    <name type="scientific">Proteus mirabilis (strain HI4320)</name>
    <dbReference type="NCBI Taxonomy" id="529507"/>
    <lineage>
        <taxon>Bacteria</taxon>
        <taxon>Pseudomonadati</taxon>
        <taxon>Pseudomonadota</taxon>
        <taxon>Gammaproteobacteria</taxon>
        <taxon>Enterobacterales</taxon>
        <taxon>Morganellaceae</taxon>
        <taxon>Proteus</taxon>
    </lineage>
</organism>
<dbReference type="EC" id="2.7.2.8" evidence="1"/>
<dbReference type="EMBL" id="AM942759">
    <property type="protein sequence ID" value="CAR46340.1"/>
    <property type="molecule type" value="Genomic_DNA"/>
</dbReference>
<dbReference type="RefSeq" id="WP_012368683.1">
    <property type="nucleotide sequence ID" value="NC_010554.1"/>
</dbReference>
<dbReference type="SMR" id="B4F1G7"/>
<dbReference type="EnsemblBacteria" id="CAR46340">
    <property type="protein sequence ID" value="CAR46340"/>
    <property type="gene ID" value="PMI3238"/>
</dbReference>
<dbReference type="GeneID" id="6803007"/>
<dbReference type="KEGG" id="pmr:PMI3238"/>
<dbReference type="PATRIC" id="fig|529507.6.peg.3165"/>
<dbReference type="eggNOG" id="COG0548">
    <property type="taxonomic scope" value="Bacteria"/>
</dbReference>
<dbReference type="HOGENOM" id="CLU_053680_1_1_6"/>
<dbReference type="UniPathway" id="UPA00068">
    <property type="reaction ID" value="UER00107"/>
</dbReference>
<dbReference type="Proteomes" id="UP000008319">
    <property type="component" value="Chromosome"/>
</dbReference>
<dbReference type="GO" id="GO:0005737">
    <property type="term" value="C:cytoplasm"/>
    <property type="evidence" value="ECO:0007669"/>
    <property type="project" value="UniProtKB-SubCell"/>
</dbReference>
<dbReference type="GO" id="GO:0003991">
    <property type="term" value="F:acetylglutamate kinase activity"/>
    <property type="evidence" value="ECO:0007669"/>
    <property type="project" value="UniProtKB-UniRule"/>
</dbReference>
<dbReference type="GO" id="GO:0005524">
    <property type="term" value="F:ATP binding"/>
    <property type="evidence" value="ECO:0007669"/>
    <property type="project" value="UniProtKB-UniRule"/>
</dbReference>
<dbReference type="GO" id="GO:0042450">
    <property type="term" value="P:arginine biosynthetic process via ornithine"/>
    <property type="evidence" value="ECO:0007669"/>
    <property type="project" value="UniProtKB-UniRule"/>
</dbReference>
<dbReference type="GO" id="GO:0006526">
    <property type="term" value="P:L-arginine biosynthetic process"/>
    <property type="evidence" value="ECO:0007669"/>
    <property type="project" value="UniProtKB-UniPathway"/>
</dbReference>
<dbReference type="CDD" id="cd04249">
    <property type="entry name" value="AAK_NAGK-NC"/>
    <property type="match status" value="1"/>
</dbReference>
<dbReference type="FunFam" id="3.40.1160.10:FF:000008">
    <property type="entry name" value="Acetylglutamate kinase"/>
    <property type="match status" value="1"/>
</dbReference>
<dbReference type="Gene3D" id="3.40.1160.10">
    <property type="entry name" value="Acetylglutamate kinase-like"/>
    <property type="match status" value="1"/>
</dbReference>
<dbReference type="HAMAP" id="MF_00082">
    <property type="entry name" value="ArgB"/>
    <property type="match status" value="1"/>
</dbReference>
<dbReference type="InterPro" id="IPR036393">
    <property type="entry name" value="AceGlu_kinase-like_sf"/>
</dbReference>
<dbReference type="InterPro" id="IPR004662">
    <property type="entry name" value="AcgluKinase_fam"/>
</dbReference>
<dbReference type="InterPro" id="IPR037528">
    <property type="entry name" value="ArgB"/>
</dbReference>
<dbReference type="InterPro" id="IPR001048">
    <property type="entry name" value="Asp/Glu/Uridylate_kinase"/>
</dbReference>
<dbReference type="InterPro" id="IPR041731">
    <property type="entry name" value="NAGK-NC"/>
</dbReference>
<dbReference type="NCBIfam" id="TIGR00761">
    <property type="entry name" value="argB"/>
    <property type="match status" value="1"/>
</dbReference>
<dbReference type="PANTHER" id="PTHR23342">
    <property type="entry name" value="N-ACETYLGLUTAMATE SYNTHASE"/>
    <property type="match status" value="1"/>
</dbReference>
<dbReference type="PANTHER" id="PTHR23342:SF0">
    <property type="entry name" value="N-ACETYLGLUTAMATE SYNTHASE, MITOCHONDRIAL"/>
    <property type="match status" value="1"/>
</dbReference>
<dbReference type="Pfam" id="PF00696">
    <property type="entry name" value="AA_kinase"/>
    <property type="match status" value="1"/>
</dbReference>
<dbReference type="PIRSF" id="PIRSF000728">
    <property type="entry name" value="NAGK"/>
    <property type="match status" value="1"/>
</dbReference>
<dbReference type="SUPFAM" id="SSF53633">
    <property type="entry name" value="Carbamate kinase-like"/>
    <property type="match status" value="1"/>
</dbReference>
<evidence type="ECO:0000255" key="1">
    <source>
        <dbReference type="HAMAP-Rule" id="MF_00082"/>
    </source>
</evidence>
<comment type="function">
    <text evidence="1">Catalyzes the ATP-dependent phosphorylation of N-acetyl-L-glutamate.</text>
</comment>
<comment type="catalytic activity">
    <reaction evidence="1">
        <text>N-acetyl-L-glutamate + ATP = N-acetyl-L-glutamyl 5-phosphate + ADP</text>
        <dbReference type="Rhea" id="RHEA:14629"/>
        <dbReference type="ChEBI" id="CHEBI:30616"/>
        <dbReference type="ChEBI" id="CHEBI:44337"/>
        <dbReference type="ChEBI" id="CHEBI:57936"/>
        <dbReference type="ChEBI" id="CHEBI:456216"/>
        <dbReference type="EC" id="2.7.2.8"/>
    </reaction>
</comment>
<comment type="pathway">
    <text evidence="1">Amino-acid biosynthesis; L-arginine biosynthesis; N(2)-acetyl-L-ornithine from L-glutamate: step 2/4.</text>
</comment>
<comment type="subunit">
    <text evidence="1">Homodimer.</text>
</comment>
<comment type="subcellular location">
    <subcellularLocation>
        <location evidence="1">Cytoplasm</location>
    </subcellularLocation>
</comment>
<comment type="similarity">
    <text evidence="1">Belongs to the acetylglutamate kinase family. ArgB subfamily.</text>
</comment>
<feature type="chain" id="PRO_1000092872" description="Acetylglutamate kinase">
    <location>
        <begin position="1"/>
        <end position="257"/>
    </location>
</feature>
<feature type="binding site" evidence="1">
    <location>
        <begin position="43"/>
        <end position="44"/>
    </location>
    <ligand>
        <name>substrate</name>
    </ligand>
</feature>
<feature type="binding site" evidence="1">
    <location>
        <position position="65"/>
    </location>
    <ligand>
        <name>substrate</name>
    </ligand>
</feature>
<feature type="binding site" evidence="1">
    <location>
        <position position="157"/>
    </location>
    <ligand>
        <name>substrate</name>
    </ligand>
</feature>
<feature type="binding site" evidence="1">
    <location>
        <begin position="180"/>
        <end position="185"/>
    </location>
    <ligand>
        <name>ATP</name>
        <dbReference type="ChEBI" id="CHEBI:30616"/>
    </ligand>
</feature>
<feature type="binding site" evidence="1">
    <location>
        <begin position="208"/>
        <end position="210"/>
    </location>
    <ligand>
        <name>ATP</name>
        <dbReference type="ChEBI" id="CHEBI:30616"/>
    </ligand>
</feature>
<feature type="site" description="Transition state stabilizer" evidence="1">
    <location>
        <position position="7"/>
    </location>
</feature>
<feature type="site" description="Transition state stabilizer" evidence="1">
    <location>
        <position position="216"/>
    </location>
</feature>
<reference key="1">
    <citation type="journal article" date="2008" name="J. Bacteriol.">
        <title>Complete genome sequence of uropathogenic Proteus mirabilis, a master of both adherence and motility.</title>
        <authorList>
            <person name="Pearson M.M."/>
            <person name="Sebaihia M."/>
            <person name="Churcher C."/>
            <person name="Quail M.A."/>
            <person name="Seshasayee A.S."/>
            <person name="Luscombe N.M."/>
            <person name="Abdellah Z."/>
            <person name="Arrosmith C."/>
            <person name="Atkin B."/>
            <person name="Chillingworth T."/>
            <person name="Hauser H."/>
            <person name="Jagels K."/>
            <person name="Moule S."/>
            <person name="Mungall K."/>
            <person name="Norbertczak H."/>
            <person name="Rabbinowitsch E."/>
            <person name="Walker D."/>
            <person name="Whithead S."/>
            <person name="Thomson N.R."/>
            <person name="Rather P.N."/>
            <person name="Parkhill J."/>
            <person name="Mobley H.L.T."/>
        </authorList>
    </citation>
    <scope>NUCLEOTIDE SEQUENCE [LARGE SCALE GENOMIC DNA]</scope>
    <source>
        <strain>HI4320</strain>
    </source>
</reference>
<accession>B4F1G7</accession>
<gene>
    <name evidence="1" type="primary">argB</name>
    <name type="ordered locus">PMI3238</name>
</gene>
<protein>
    <recommendedName>
        <fullName evidence="1">Acetylglutamate kinase</fullName>
        <ecNumber evidence="1">2.7.2.8</ecNumber>
    </recommendedName>
    <alternativeName>
        <fullName evidence="1">N-acetyl-L-glutamate 5-phosphotransferase</fullName>
    </alternativeName>
    <alternativeName>
        <fullName evidence="1">NAG kinase</fullName>
        <shortName evidence="1">NAGK</shortName>
    </alternativeName>
</protein>
<sequence length="257" mass="27117">MEPLIIKLGGVLLDNEKALTRFFTALQEYRTSHSRPLVIVHGGGCLVDSLMKKLQLPVVKKQGLRVTPADQIDIITGALAGSANKTLLSWATRFGLNGVGLCLGDGQLAKVTKISDELGHVGNAEPGSPELLNLLLNAGYLPIISSIGVSIQGELMNVNADQAATAIAETLGADLVLLSDVSGILDGKGQKLTEISATKAQALIDQGIITDGMIVKVNAALEAARTLRRPVEIASWRHAEKLTDLFNGMVIGTRILA</sequence>
<name>ARGB_PROMH</name>
<keyword id="KW-0028">Amino-acid biosynthesis</keyword>
<keyword id="KW-0055">Arginine biosynthesis</keyword>
<keyword id="KW-0067">ATP-binding</keyword>
<keyword id="KW-0963">Cytoplasm</keyword>
<keyword id="KW-0418">Kinase</keyword>
<keyword id="KW-0547">Nucleotide-binding</keyword>
<keyword id="KW-1185">Reference proteome</keyword>
<keyword id="KW-0808">Transferase</keyword>